<protein>
    <recommendedName>
        <fullName evidence="1">Protease HtpX</fullName>
        <ecNumber evidence="1">3.4.24.-</ecNumber>
    </recommendedName>
    <alternativeName>
        <fullName evidence="1">Heat shock protein HtpX</fullName>
    </alternativeName>
</protein>
<keyword id="KW-1003">Cell membrane</keyword>
<keyword id="KW-0378">Hydrolase</keyword>
<keyword id="KW-0472">Membrane</keyword>
<keyword id="KW-0479">Metal-binding</keyword>
<keyword id="KW-0482">Metalloprotease</keyword>
<keyword id="KW-0645">Protease</keyword>
<keyword id="KW-1185">Reference proteome</keyword>
<keyword id="KW-0812">Transmembrane</keyword>
<keyword id="KW-1133">Transmembrane helix</keyword>
<keyword id="KW-0862">Zinc</keyword>
<name>HTPX_WIGBR</name>
<evidence type="ECO:0000255" key="1">
    <source>
        <dbReference type="HAMAP-Rule" id="MF_00188"/>
    </source>
</evidence>
<reference key="1">
    <citation type="journal article" date="2002" name="Nat. Genet.">
        <title>Genome sequence of the endocellular obligate symbiont of tsetse flies, Wigglesworthia glossinidia.</title>
        <authorList>
            <person name="Akman L."/>
            <person name="Yamashita A."/>
            <person name="Watanabe H."/>
            <person name="Oshima K."/>
            <person name="Shiba T."/>
            <person name="Hattori M."/>
            <person name="Aksoy S."/>
        </authorList>
    </citation>
    <scope>NUCLEOTIDE SEQUENCE [LARGE SCALE GENOMIC DNA]</scope>
</reference>
<accession>Q8D396</accession>
<gene>
    <name evidence="1" type="primary">htpX</name>
    <name type="ordered locus">WIGBR1050</name>
</gene>
<proteinExistence type="inferred from homology"/>
<feature type="chain" id="PRO_0000138906" description="Protease HtpX">
    <location>
        <begin position="1"/>
        <end position="294"/>
    </location>
</feature>
<feature type="transmembrane region" description="Helical" evidence="1">
    <location>
        <begin position="4"/>
        <end position="24"/>
    </location>
</feature>
<feature type="transmembrane region" description="Helical" evidence="1">
    <location>
        <begin position="33"/>
        <end position="53"/>
    </location>
</feature>
<feature type="transmembrane region" description="Helical" evidence="1">
    <location>
        <begin position="147"/>
        <end position="167"/>
    </location>
</feature>
<feature type="transmembrane region" description="Helical" evidence="1">
    <location>
        <begin position="197"/>
        <end position="217"/>
    </location>
</feature>
<feature type="active site" evidence="1">
    <location>
        <position position="140"/>
    </location>
</feature>
<feature type="binding site" evidence="1">
    <location>
        <position position="139"/>
    </location>
    <ligand>
        <name>Zn(2+)</name>
        <dbReference type="ChEBI" id="CHEBI:29105"/>
        <note>catalytic</note>
    </ligand>
</feature>
<feature type="binding site" evidence="1">
    <location>
        <position position="143"/>
    </location>
    <ligand>
        <name>Zn(2+)</name>
        <dbReference type="ChEBI" id="CHEBI:29105"/>
        <note>catalytic</note>
    </ligand>
</feature>
<feature type="binding site" evidence="1">
    <location>
        <position position="223"/>
    </location>
    <ligand>
        <name>Zn(2+)</name>
        <dbReference type="ChEBI" id="CHEBI:29105"/>
        <note>catalytic</note>
    </ligand>
</feature>
<dbReference type="EC" id="3.4.24.-" evidence="1"/>
<dbReference type="EMBL" id="BA000021">
    <property type="protein sequence ID" value="BAC24251.1"/>
    <property type="molecule type" value="Genomic_DNA"/>
</dbReference>
<dbReference type="SMR" id="Q8D396"/>
<dbReference type="STRING" id="36870.gene:10368583"/>
<dbReference type="MEROPS" id="M48.002"/>
<dbReference type="KEGG" id="wbr:htpX"/>
<dbReference type="eggNOG" id="COG0501">
    <property type="taxonomic scope" value="Bacteria"/>
</dbReference>
<dbReference type="HOGENOM" id="CLU_042266_1_0_6"/>
<dbReference type="OrthoDB" id="15218at2"/>
<dbReference type="Proteomes" id="UP000000562">
    <property type="component" value="Chromosome"/>
</dbReference>
<dbReference type="GO" id="GO:0005886">
    <property type="term" value="C:plasma membrane"/>
    <property type="evidence" value="ECO:0007669"/>
    <property type="project" value="UniProtKB-SubCell"/>
</dbReference>
<dbReference type="GO" id="GO:0004222">
    <property type="term" value="F:metalloendopeptidase activity"/>
    <property type="evidence" value="ECO:0007669"/>
    <property type="project" value="UniProtKB-UniRule"/>
</dbReference>
<dbReference type="GO" id="GO:0008270">
    <property type="term" value="F:zinc ion binding"/>
    <property type="evidence" value="ECO:0007669"/>
    <property type="project" value="UniProtKB-UniRule"/>
</dbReference>
<dbReference type="GO" id="GO:0006508">
    <property type="term" value="P:proteolysis"/>
    <property type="evidence" value="ECO:0007669"/>
    <property type="project" value="UniProtKB-KW"/>
</dbReference>
<dbReference type="CDD" id="cd07335">
    <property type="entry name" value="M48B_HtpX_like"/>
    <property type="match status" value="1"/>
</dbReference>
<dbReference type="Gene3D" id="3.30.2010.10">
    <property type="entry name" value="Metalloproteases ('zincins'), catalytic domain"/>
    <property type="match status" value="1"/>
</dbReference>
<dbReference type="HAMAP" id="MF_00188">
    <property type="entry name" value="Pept_M48_protease_HtpX"/>
    <property type="match status" value="1"/>
</dbReference>
<dbReference type="InterPro" id="IPR050083">
    <property type="entry name" value="HtpX_protease"/>
</dbReference>
<dbReference type="InterPro" id="IPR022919">
    <property type="entry name" value="Pept_M48_protease_HtpX"/>
</dbReference>
<dbReference type="InterPro" id="IPR001915">
    <property type="entry name" value="Peptidase_M48"/>
</dbReference>
<dbReference type="NCBIfam" id="NF003965">
    <property type="entry name" value="PRK05457.1"/>
    <property type="match status" value="1"/>
</dbReference>
<dbReference type="PANTHER" id="PTHR43221">
    <property type="entry name" value="PROTEASE HTPX"/>
    <property type="match status" value="1"/>
</dbReference>
<dbReference type="PANTHER" id="PTHR43221:SF1">
    <property type="entry name" value="PROTEASE HTPX"/>
    <property type="match status" value="1"/>
</dbReference>
<dbReference type="Pfam" id="PF01435">
    <property type="entry name" value="Peptidase_M48"/>
    <property type="match status" value="1"/>
</dbReference>
<dbReference type="PROSITE" id="PS00142">
    <property type="entry name" value="ZINC_PROTEASE"/>
    <property type="match status" value="1"/>
</dbReference>
<organism>
    <name type="scientific">Wigglesworthia glossinidia brevipalpis</name>
    <dbReference type="NCBI Taxonomy" id="36870"/>
    <lineage>
        <taxon>Bacteria</taxon>
        <taxon>Pseudomonadati</taxon>
        <taxon>Pseudomonadota</taxon>
        <taxon>Gammaproteobacteria</taxon>
        <taxon>Enterobacterales</taxon>
        <taxon>Erwiniaceae</taxon>
        <taxon>Wigglesworthia</taxon>
    </lineage>
</organism>
<sequence length="294" mass="32698">MMRILLFILTNLSVMIIFGIILFITGIKSSSSFGLIIMSGVFGFGGSIISLLLSKYIAINSVNAKIIKNPKNDIENWLFNTIKLQSQKANIGTPDIAIYDAEDINAFATGPKKNSALIAVSTGLLNNMSKKEAEAVLAHEISHISNGDMITMTLIQGVVNTFVIFLSRVISKFIVNLFSTNKEDENSYESENSWSYFFISMALEVVFGILASIITFWFSRKREFYADAGSAEIVGKNNMIAALQKIKNTCEPNVGKELLAFCINGKKSFNEIFMSHPPIDKRIQALIQEKYMKK</sequence>
<comment type="cofactor">
    <cofactor evidence="1">
        <name>Zn(2+)</name>
        <dbReference type="ChEBI" id="CHEBI:29105"/>
    </cofactor>
    <text evidence="1">Binds 1 zinc ion per subunit.</text>
</comment>
<comment type="subcellular location">
    <subcellularLocation>
        <location evidence="1">Cell membrane</location>
        <topology evidence="1">Multi-pass membrane protein</topology>
    </subcellularLocation>
</comment>
<comment type="similarity">
    <text evidence="1">Belongs to the peptidase M48B family.</text>
</comment>